<name>DHH1_COCIM</name>
<protein>
    <recommendedName>
        <fullName>ATP-dependent RNA helicase DHH1</fullName>
        <ecNumber>3.6.4.13</ecNumber>
    </recommendedName>
</protein>
<accession>Q1E5R1</accession>
<accession>J3KL06</accession>
<keyword id="KW-0067">ATP-binding</keyword>
<keyword id="KW-0963">Cytoplasm</keyword>
<keyword id="KW-0347">Helicase</keyword>
<keyword id="KW-0378">Hydrolase</keyword>
<keyword id="KW-0507">mRNA processing</keyword>
<keyword id="KW-0509">mRNA transport</keyword>
<keyword id="KW-0547">Nucleotide-binding</keyword>
<keyword id="KW-1185">Reference proteome</keyword>
<keyword id="KW-0694">RNA-binding</keyword>
<keyword id="KW-0810">Translation regulation</keyword>
<keyword id="KW-0813">Transport</keyword>
<gene>
    <name type="primary">DHH1</name>
    <name type="ORF">CIMG_02102</name>
</gene>
<reference key="1">
    <citation type="journal article" date="2009" name="Genome Res.">
        <title>Comparative genomic analyses of the human fungal pathogens Coccidioides and their relatives.</title>
        <authorList>
            <person name="Sharpton T.J."/>
            <person name="Stajich J.E."/>
            <person name="Rounsley S.D."/>
            <person name="Gardner M.J."/>
            <person name="Wortman J.R."/>
            <person name="Jordar V.S."/>
            <person name="Maiti R."/>
            <person name="Kodira C.D."/>
            <person name="Neafsey D.E."/>
            <person name="Zeng Q."/>
            <person name="Hung C.-Y."/>
            <person name="McMahan C."/>
            <person name="Muszewska A."/>
            <person name="Grynberg M."/>
            <person name="Mandel M.A."/>
            <person name="Kellner E.M."/>
            <person name="Barker B.M."/>
            <person name="Galgiani J.N."/>
            <person name="Orbach M.J."/>
            <person name="Kirkland T.N."/>
            <person name="Cole G.T."/>
            <person name="Henn M.R."/>
            <person name="Birren B.W."/>
            <person name="Taylor J.W."/>
        </authorList>
    </citation>
    <scope>NUCLEOTIDE SEQUENCE [LARGE SCALE GENOMIC DNA]</scope>
    <source>
        <strain>RS</strain>
    </source>
</reference>
<reference key="2">
    <citation type="journal article" date="2010" name="Genome Res.">
        <title>Population genomic sequencing of Coccidioides fungi reveals recent hybridization and transposon control.</title>
        <authorList>
            <person name="Neafsey D.E."/>
            <person name="Barker B.M."/>
            <person name="Sharpton T.J."/>
            <person name="Stajich J.E."/>
            <person name="Park D.J."/>
            <person name="Whiston E."/>
            <person name="Hung C.-Y."/>
            <person name="McMahan C."/>
            <person name="White J."/>
            <person name="Sykes S."/>
            <person name="Heiman D."/>
            <person name="Young S."/>
            <person name="Zeng Q."/>
            <person name="Abouelleil A."/>
            <person name="Aftuck L."/>
            <person name="Bessette D."/>
            <person name="Brown A."/>
            <person name="FitzGerald M."/>
            <person name="Lui A."/>
            <person name="Macdonald J.P."/>
            <person name="Priest M."/>
            <person name="Orbach M.J."/>
            <person name="Galgiani J.N."/>
            <person name="Kirkland T.N."/>
            <person name="Cole G.T."/>
            <person name="Birren B.W."/>
            <person name="Henn M.R."/>
            <person name="Taylor J.W."/>
            <person name="Rounsley S.D."/>
        </authorList>
    </citation>
    <scope>GENOME REANNOTATION</scope>
    <source>
        <strain>RS</strain>
    </source>
</reference>
<dbReference type="EC" id="3.6.4.13"/>
<dbReference type="EMBL" id="GG704911">
    <property type="protein sequence ID" value="EAS36748.3"/>
    <property type="molecule type" value="Genomic_DNA"/>
</dbReference>
<dbReference type="RefSeq" id="XP_001248331.1">
    <property type="nucleotide sequence ID" value="XM_001248330.2"/>
</dbReference>
<dbReference type="SMR" id="Q1E5R1"/>
<dbReference type="FunCoup" id="Q1E5R1">
    <property type="interactions" value="1287"/>
</dbReference>
<dbReference type="STRING" id="246410.Q1E5R1"/>
<dbReference type="GeneID" id="4566476"/>
<dbReference type="KEGG" id="cim:CIMG_02102"/>
<dbReference type="VEuPathDB" id="FungiDB:CIMG_02102"/>
<dbReference type="InParanoid" id="Q1E5R1"/>
<dbReference type="OMA" id="TYEDRHT"/>
<dbReference type="OrthoDB" id="10265785at2759"/>
<dbReference type="Proteomes" id="UP000001261">
    <property type="component" value="Unassembled WGS sequence"/>
</dbReference>
<dbReference type="GO" id="GO:0000932">
    <property type="term" value="C:P-body"/>
    <property type="evidence" value="ECO:0007669"/>
    <property type="project" value="UniProtKB-SubCell"/>
</dbReference>
<dbReference type="GO" id="GO:0005524">
    <property type="term" value="F:ATP binding"/>
    <property type="evidence" value="ECO:0007669"/>
    <property type="project" value="UniProtKB-KW"/>
</dbReference>
<dbReference type="GO" id="GO:0016887">
    <property type="term" value="F:ATP hydrolysis activity"/>
    <property type="evidence" value="ECO:0007669"/>
    <property type="project" value="RHEA"/>
</dbReference>
<dbReference type="GO" id="GO:0003723">
    <property type="term" value="F:RNA binding"/>
    <property type="evidence" value="ECO:0007669"/>
    <property type="project" value="UniProtKB-KW"/>
</dbReference>
<dbReference type="GO" id="GO:0003724">
    <property type="term" value="F:RNA helicase activity"/>
    <property type="evidence" value="ECO:0007669"/>
    <property type="project" value="UniProtKB-EC"/>
</dbReference>
<dbReference type="GO" id="GO:0006397">
    <property type="term" value="P:mRNA processing"/>
    <property type="evidence" value="ECO:0007669"/>
    <property type="project" value="UniProtKB-KW"/>
</dbReference>
<dbReference type="GO" id="GO:0051028">
    <property type="term" value="P:mRNA transport"/>
    <property type="evidence" value="ECO:0007669"/>
    <property type="project" value="UniProtKB-KW"/>
</dbReference>
<dbReference type="GO" id="GO:0006417">
    <property type="term" value="P:regulation of translation"/>
    <property type="evidence" value="ECO:0007669"/>
    <property type="project" value="UniProtKB-KW"/>
</dbReference>
<dbReference type="CDD" id="cd17940">
    <property type="entry name" value="DEADc_DDX6"/>
    <property type="match status" value="1"/>
</dbReference>
<dbReference type="CDD" id="cd18787">
    <property type="entry name" value="SF2_C_DEAD"/>
    <property type="match status" value="1"/>
</dbReference>
<dbReference type="FunFam" id="3.40.50.300:FF:000114">
    <property type="entry name" value="ATP-dependent RNA helicase DDX6"/>
    <property type="match status" value="1"/>
</dbReference>
<dbReference type="FunFam" id="3.40.50.300:FF:000364">
    <property type="entry name" value="ATP-dependent RNA helicase DDX6"/>
    <property type="match status" value="1"/>
</dbReference>
<dbReference type="Gene3D" id="3.40.50.300">
    <property type="entry name" value="P-loop containing nucleotide triphosphate hydrolases"/>
    <property type="match status" value="2"/>
</dbReference>
<dbReference type="InterPro" id="IPR011545">
    <property type="entry name" value="DEAD/DEAH_box_helicase_dom"/>
</dbReference>
<dbReference type="InterPro" id="IPR014001">
    <property type="entry name" value="Helicase_ATP-bd"/>
</dbReference>
<dbReference type="InterPro" id="IPR001650">
    <property type="entry name" value="Helicase_C-like"/>
</dbReference>
<dbReference type="InterPro" id="IPR027417">
    <property type="entry name" value="P-loop_NTPase"/>
</dbReference>
<dbReference type="InterPro" id="IPR000629">
    <property type="entry name" value="RNA-helicase_DEAD-box_CS"/>
</dbReference>
<dbReference type="InterPro" id="IPR014014">
    <property type="entry name" value="RNA_helicase_DEAD_Q_motif"/>
</dbReference>
<dbReference type="PANTHER" id="PTHR47960">
    <property type="entry name" value="DEAD-BOX ATP-DEPENDENT RNA HELICASE 50"/>
    <property type="match status" value="1"/>
</dbReference>
<dbReference type="Pfam" id="PF00270">
    <property type="entry name" value="DEAD"/>
    <property type="match status" value="1"/>
</dbReference>
<dbReference type="Pfam" id="PF00271">
    <property type="entry name" value="Helicase_C"/>
    <property type="match status" value="1"/>
</dbReference>
<dbReference type="SMART" id="SM00487">
    <property type="entry name" value="DEXDc"/>
    <property type="match status" value="1"/>
</dbReference>
<dbReference type="SMART" id="SM00490">
    <property type="entry name" value="HELICc"/>
    <property type="match status" value="1"/>
</dbReference>
<dbReference type="SUPFAM" id="SSF52540">
    <property type="entry name" value="P-loop containing nucleoside triphosphate hydrolases"/>
    <property type="match status" value="1"/>
</dbReference>
<dbReference type="PROSITE" id="PS00039">
    <property type="entry name" value="DEAD_ATP_HELICASE"/>
    <property type="match status" value="1"/>
</dbReference>
<dbReference type="PROSITE" id="PS51192">
    <property type="entry name" value="HELICASE_ATP_BIND_1"/>
    <property type="match status" value="1"/>
</dbReference>
<dbReference type="PROSITE" id="PS51194">
    <property type="entry name" value="HELICASE_CTER"/>
    <property type="match status" value="1"/>
</dbReference>
<dbReference type="PROSITE" id="PS51195">
    <property type="entry name" value="Q_MOTIF"/>
    <property type="match status" value="1"/>
</dbReference>
<evidence type="ECO:0000250" key="1"/>
<evidence type="ECO:0000255" key="2">
    <source>
        <dbReference type="PROSITE-ProRule" id="PRU00541"/>
    </source>
</evidence>
<evidence type="ECO:0000255" key="3">
    <source>
        <dbReference type="PROSITE-ProRule" id="PRU00542"/>
    </source>
</evidence>
<evidence type="ECO:0000256" key="4">
    <source>
        <dbReference type="SAM" id="MobiDB-lite"/>
    </source>
</evidence>
<evidence type="ECO:0000305" key="5"/>
<feature type="chain" id="PRO_0000255997" description="ATP-dependent RNA helicase DHH1">
    <location>
        <begin position="1"/>
        <end position="512"/>
    </location>
</feature>
<feature type="domain" description="Helicase ATP-binding" evidence="2">
    <location>
        <begin position="78"/>
        <end position="248"/>
    </location>
</feature>
<feature type="domain" description="Helicase C-terminal" evidence="3">
    <location>
        <begin position="258"/>
        <end position="418"/>
    </location>
</feature>
<feature type="region of interest" description="Disordered" evidence="4">
    <location>
        <begin position="1"/>
        <end position="24"/>
    </location>
</feature>
<feature type="region of interest" description="Disordered" evidence="4">
    <location>
        <begin position="429"/>
        <end position="512"/>
    </location>
</feature>
<feature type="short sequence motif" description="Q motif">
    <location>
        <begin position="47"/>
        <end position="75"/>
    </location>
</feature>
<feature type="short sequence motif" description="DEAD box">
    <location>
        <begin position="196"/>
        <end position="199"/>
    </location>
</feature>
<feature type="compositionally biased region" description="Polar residues" evidence="4">
    <location>
        <begin position="433"/>
        <end position="450"/>
    </location>
</feature>
<feature type="compositionally biased region" description="Polar residues" evidence="4">
    <location>
        <begin position="494"/>
        <end position="512"/>
    </location>
</feature>
<feature type="binding site" evidence="2">
    <location>
        <begin position="91"/>
        <end position="98"/>
    </location>
    <ligand>
        <name>ATP</name>
        <dbReference type="ChEBI" id="CHEBI:30616"/>
    </ligand>
</feature>
<proteinExistence type="inferred from homology"/>
<comment type="function">
    <text evidence="1">ATP-dependent RNA helicase involved in mRNA turnover, and more specifically in mRNA decapping. Is involved in G1/S DNA-damage checkpoint recovery, probably through the regulation of the translational status of a subset of mRNAs. May also have a role in translation and mRNA nuclear export (By similarity).</text>
</comment>
<comment type="catalytic activity">
    <reaction>
        <text>ATP + H2O = ADP + phosphate + H(+)</text>
        <dbReference type="Rhea" id="RHEA:13065"/>
        <dbReference type="ChEBI" id="CHEBI:15377"/>
        <dbReference type="ChEBI" id="CHEBI:15378"/>
        <dbReference type="ChEBI" id="CHEBI:30616"/>
        <dbReference type="ChEBI" id="CHEBI:43474"/>
        <dbReference type="ChEBI" id="CHEBI:456216"/>
        <dbReference type="EC" id="3.6.4.13"/>
    </reaction>
</comment>
<comment type="subcellular location">
    <subcellularLocation>
        <location evidence="1">Cytoplasm</location>
        <location evidence="1">P-body</location>
    </subcellularLocation>
    <text evidence="1">Is concentrated in several cytoplasmic foci called P bodies (or cytoplasmic processing bodies) which represent sites of mRNA decapping and 5' to 3' exonucleotidic decay.</text>
</comment>
<comment type="domain">
    <text>The Q motif is unique to and characteristic of the DEAD box family of RNA helicases and controls ATP binding and hydrolysis.</text>
</comment>
<comment type="similarity">
    <text evidence="5">Belongs to the DEAD box helicase family. DDX6/DHH1 subfamily.</text>
</comment>
<sequence length="512" mass="57369">MAEALASQLNKAKLGDNGAETKWKEQLKLPPKDTRTQTEDVTATKGLEFEDFYIKRELMMGIFEAGFEKPSPIQEETIPVALTGRDILARAKNGTGKTAAFVIPTLERTNPKISKTQALILVPTRELALQTSQVCKTLGKHLGINVMVTTGGTGLQDDIIRLSDTVHIIVGTPGRILDLASKGVADLSECTTFVMDEADKLLSPEFTPVIEQLLSFHPKDRQVMLFSATFPMIVKSFKDKHMRNPYEINLMDELTLRGITQYYAFVEERQKVHCLNTLFSKLQINQSIIFCNSTNRVELLAKKITELGYSCFYSHARMLQQNRNRVFHDFRNGVCRNLVCSDLLTRGIDIQAVNVVINFDFPKNAETYLHRIGRSGRFGHLGLAINLINWDDRYNLYKIEQELGTEIQPIPPSIDKKLYVYDTPETIPRPIANASTERNPPAQLAQSSDNQNHRQAHHISGGHGQQTANRGHSLRGSYRGGRAQGHRGGHPENNRTNPMSSRSNMPTSTTAS</sequence>
<organism>
    <name type="scientific">Coccidioides immitis (strain RS)</name>
    <name type="common">Valley fever fungus</name>
    <dbReference type="NCBI Taxonomy" id="246410"/>
    <lineage>
        <taxon>Eukaryota</taxon>
        <taxon>Fungi</taxon>
        <taxon>Dikarya</taxon>
        <taxon>Ascomycota</taxon>
        <taxon>Pezizomycotina</taxon>
        <taxon>Eurotiomycetes</taxon>
        <taxon>Eurotiomycetidae</taxon>
        <taxon>Onygenales</taxon>
        <taxon>Onygenaceae</taxon>
        <taxon>Coccidioides</taxon>
    </lineage>
</organism>